<reference key="1">
    <citation type="journal article" date="2004" name="Nat. Genet.">
        <title>Complete sequencing and characterization of 21,243 full-length human cDNAs.</title>
        <authorList>
            <person name="Ota T."/>
            <person name="Suzuki Y."/>
            <person name="Nishikawa T."/>
            <person name="Otsuki T."/>
            <person name="Sugiyama T."/>
            <person name="Irie R."/>
            <person name="Wakamatsu A."/>
            <person name="Hayashi K."/>
            <person name="Sato H."/>
            <person name="Nagai K."/>
            <person name="Kimura K."/>
            <person name="Makita H."/>
            <person name="Sekine M."/>
            <person name="Obayashi M."/>
            <person name="Nishi T."/>
            <person name="Shibahara T."/>
            <person name="Tanaka T."/>
            <person name="Ishii S."/>
            <person name="Yamamoto J."/>
            <person name="Saito K."/>
            <person name="Kawai Y."/>
            <person name="Isono Y."/>
            <person name="Nakamura Y."/>
            <person name="Nagahari K."/>
            <person name="Murakami K."/>
            <person name="Yasuda T."/>
            <person name="Iwayanagi T."/>
            <person name="Wagatsuma M."/>
            <person name="Shiratori A."/>
            <person name="Sudo H."/>
            <person name="Hosoiri T."/>
            <person name="Kaku Y."/>
            <person name="Kodaira H."/>
            <person name="Kondo H."/>
            <person name="Sugawara M."/>
            <person name="Takahashi M."/>
            <person name="Kanda K."/>
            <person name="Yokoi T."/>
            <person name="Furuya T."/>
            <person name="Kikkawa E."/>
            <person name="Omura Y."/>
            <person name="Abe K."/>
            <person name="Kamihara K."/>
            <person name="Katsuta N."/>
            <person name="Sato K."/>
            <person name="Tanikawa M."/>
            <person name="Yamazaki M."/>
            <person name="Ninomiya K."/>
            <person name="Ishibashi T."/>
            <person name="Yamashita H."/>
            <person name="Murakawa K."/>
            <person name="Fujimori K."/>
            <person name="Tanai H."/>
            <person name="Kimata M."/>
            <person name="Watanabe M."/>
            <person name="Hiraoka S."/>
            <person name="Chiba Y."/>
            <person name="Ishida S."/>
            <person name="Ono Y."/>
            <person name="Takiguchi S."/>
            <person name="Watanabe S."/>
            <person name="Yosida M."/>
            <person name="Hotuta T."/>
            <person name="Kusano J."/>
            <person name="Kanehori K."/>
            <person name="Takahashi-Fujii A."/>
            <person name="Hara H."/>
            <person name="Tanase T.-O."/>
            <person name="Nomura Y."/>
            <person name="Togiya S."/>
            <person name="Komai F."/>
            <person name="Hara R."/>
            <person name="Takeuchi K."/>
            <person name="Arita M."/>
            <person name="Imose N."/>
            <person name="Musashino K."/>
            <person name="Yuuki H."/>
            <person name="Oshima A."/>
            <person name="Sasaki N."/>
            <person name="Aotsuka S."/>
            <person name="Yoshikawa Y."/>
            <person name="Matsunawa H."/>
            <person name="Ichihara T."/>
            <person name="Shiohata N."/>
            <person name="Sano S."/>
            <person name="Moriya S."/>
            <person name="Momiyama H."/>
            <person name="Satoh N."/>
            <person name="Takami S."/>
            <person name="Terashima Y."/>
            <person name="Suzuki O."/>
            <person name="Nakagawa S."/>
            <person name="Senoh A."/>
            <person name="Mizoguchi H."/>
            <person name="Goto Y."/>
            <person name="Shimizu F."/>
            <person name="Wakebe H."/>
            <person name="Hishigaki H."/>
            <person name="Watanabe T."/>
            <person name="Sugiyama A."/>
            <person name="Takemoto M."/>
            <person name="Kawakami B."/>
            <person name="Yamazaki M."/>
            <person name="Watanabe K."/>
            <person name="Kumagai A."/>
            <person name="Itakura S."/>
            <person name="Fukuzumi Y."/>
            <person name="Fujimori Y."/>
            <person name="Komiyama M."/>
            <person name="Tashiro H."/>
            <person name="Tanigami A."/>
            <person name="Fujiwara T."/>
            <person name="Ono T."/>
            <person name="Yamada K."/>
            <person name="Fujii Y."/>
            <person name="Ozaki K."/>
            <person name="Hirao M."/>
            <person name="Ohmori Y."/>
            <person name="Kawabata A."/>
            <person name="Hikiji T."/>
            <person name="Kobatake N."/>
            <person name="Inagaki H."/>
            <person name="Ikema Y."/>
            <person name="Okamoto S."/>
            <person name="Okitani R."/>
            <person name="Kawakami T."/>
            <person name="Noguchi S."/>
            <person name="Itoh T."/>
            <person name="Shigeta K."/>
            <person name="Senba T."/>
            <person name="Matsumura K."/>
            <person name="Nakajima Y."/>
            <person name="Mizuno T."/>
            <person name="Morinaga M."/>
            <person name="Sasaki M."/>
            <person name="Togashi T."/>
            <person name="Oyama M."/>
            <person name="Hata H."/>
            <person name="Watanabe M."/>
            <person name="Komatsu T."/>
            <person name="Mizushima-Sugano J."/>
            <person name="Satoh T."/>
            <person name="Shirai Y."/>
            <person name="Takahashi Y."/>
            <person name="Nakagawa K."/>
            <person name="Okumura K."/>
            <person name="Nagase T."/>
            <person name="Nomura N."/>
            <person name="Kikuchi H."/>
            <person name="Masuho Y."/>
            <person name="Yamashita R."/>
            <person name="Nakai K."/>
            <person name="Yada T."/>
            <person name="Nakamura Y."/>
            <person name="Ohara O."/>
            <person name="Isogai T."/>
            <person name="Sugano S."/>
        </authorList>
    </citation>
    <scope>NUCLEOTIDE SEQUENCE [LARGE SCALE MRNA] (ISOFORMS 1 AND 3)</scope>
    <source>
        <tissue>Brain</tissue>
        <tissue>Corpus callosum</tissue>
    </source>
</reference>
<reference key="2">
    <citation type="journal article" date="2001" name="Nature">
        <title>The DNA sequence and comparative analysis of human chromosome 20.</title>
        <authorList>
            <person name="Deloukas P."/>
            <person name="Matthews L.H."/>
            <person name="Ashurst J.L."/>
            <person name="Burton J."/>
            <person name="Gilbert J.G.R."/>
            <person name="Jones M."/>
            <person name="Stavrides G."/>
            <person name="Almeida J.P."/>
            <person name="Babbage A.K."/>
            <person name="Bagguley C.L."/>
            <person name="Bailey J."/>
            <person name="Barlow K.F."/>
            <person name="Bates K.N."/>
            <person name="Beard L.M."/>
            <person name="Beare D.M."/>
            <person name="Beasley O.P."/>
            <person name="Bird C.P."/>
            <person name="Blakey S.E."/>
            <person name="Bridgeman A.M."/>
            <person name="Brown A.J."/>
            <person name="Buck D."/>
            <person name="Burrill W.D."/>
            <person name="Butler A.P."/>
            <person name="Carder C."/>
            <person name="Carter N.P."/>
            <person name="Chapman J.C."/>
            <person name="Clamp M."/>
            <person name="Clark G."/>
            <person name="Clark L.N."/>
            <person name="Clark S.Y."/>
            <person name="Clee C.M."/>
            <person name="Clegg S."/>
            <person name="Cobley V.E."/>
            <person name="Collier R.E."/>
            <person name="Connor R.E."/>
            <person name="Corby N.R."/>
            <person name="Coulson A."/>
            <person name="Coville G.J."/>
            <person name="Deadman R."/>
            <person name="Dhami P.D."/>
            <person name="Dunn M."/>
            <person name="Ellington A.G."/>
            <person name="Frankland J.A."/>
            <person name="Fraser A."/>
            <person name="French L."/>
            <person name="Garner P."/>
            <person name="Grafham D.V."/>
            <person name="Griffiths C."/>
            <person name="Griffiths M.N.D."/>
            <person name="Gwilliam R."/>
            <person name="Hall R.E."/>
            <person name="Hammond S."/>
            <person name="Harley J.L."/>
            <person name="Heath P.D."/>
            <person name="Ho S."/>
            <person name="Holden J.L."/>
            <person name="Howden P.J."/>
            <person name="Huckle E."/>
            <person name="Hunt A.R."/>
            <person name="Hunt S.E."/>
            <person name="Jekosch K."/>
            <person name="Johnson C.M."/>
            <person name="Johnson D."/>
            <person name="Kay M.P."/>
            <person name="Kimberley A.M."/>
            <person name="King A."/>
            <person name="Knights A."/>
            <person name="Laird G.K."/>
            <person name="Lawlor S."/>
            <person name="Lehvaeslaiho M.H."/>
            <person name="Leversha M.A."/>
            <person name="Lloyd C."/>
            <person name="Lloyd D.M."/>
            <person name="Lovell J.D."/>
            <person name="Marsh V.L."/>
            <person name="Martin S.L."/>
            <person name="McConnachie L.J."/>
            <person name="McLay K."/>
            <person name="McMurray A.A."/>
            <person name="Milne S.A."/>
            <person name="Mistry D."/>
            <person name="Moore M.J.F."/>
            <person name="Mullikin J.C."/>
            <person name="Nickerson T."/>
            <person name="Oliver K."/>
            <person name="Parker A."/>
            <person name="Patel R."/>
            <person name="Pearce T.A.V."/>
            <person name="Peck A.I."/>
            <person name="Phillimore B.J.C.T."/>
            <person name="Prathalingam S.R."/>
            <person name="Plumb R.W."/>
            <person name="Ramsay H."/>
            <person name="Rice C.M."/>
            <person name="Ross M.T."/>
            <person name="Scott C.E."/>
            <person name="Sehra H.K."/>
            <person name="Shownkeen R."/>
            <person name="Sims S."/>
            <person name="Skuce C.D."/>
            <person name="Smith M.L."/>
            <person name="Soderlund C."/>
            <person name="Steward C.A."/>
            <person name="Sulston J.E."/>
            <person name="Swann R.M."/>
            <person name="Sycamore N."/>
            <person name="Taylor R."/>
            <person name="Tee L."/>
            <person name="Thomas D.W."/>
            <person name="Thorpe A."/>
            <person name="Tracey A."/>
            <person name="Tromans A.C."/>
            <person name="Vaudin M."/>
            <person name="Wall M."/>
            <person name="Wallis J.M."/>
            <person name="Whitehead S.L."/>
            <person name="Whittaker P."/>
            <person name="Willey D.L."/>
            <person name="Williams L."/>
            <person name="Williams S.A."/>
            <person name="Wilming L."/>
            <person name="Wray P.W."/>
            <person name="Hubbard T."/>
            <person name="Durbin R.M."/>
            <person name="Bentley D.R."/>
            <person name="Beck S."/>
            <person name="Rogers J."/>
        </authorList>
    </citation>
    <scope>NUCLEOTIDE SEQUENCE [LARGE SCALE GENOMIC DNA]</scope>
</reference>
<reference key="3">
    <citation type="submission" date="2005-09" db="EMBL/GenBank/DDBJ databases">
        <authorList>
            <person name="Mural R.J."/>
            <person name="Istrail S."/>
            <person name="Sutton G."/>
            <person name="Florea L."/>
            <person name="Halpern A.L."/>
            <person name="Mobarry C.M."/>
            <person name="Lippert R."/>
            <person name="Walenz B."/>
            <person name="Shatkay H."/>
            <person name="Dew I."/>
            <person name="Miller J.R."/>
            <person name="Flanigan M.J."/>
            <person name="Edwards N.J."/>
            <person name="Bolanos R."/>
            <person name="Fasulo D."/>
            <person name="Halldorsson B.V."/>
            <person name="Hannenhalli S."/>
            <person name="Turner R."/>
            <person name="Yooseph S."/>
            <person name="Lu F."/>
            <person name="Nusskern D.R."/>
            <person name="Shue B.C."/>
            <person name="Zheng X.H."/>
            <person name="Zhong F."/>
            <person name="Delcher A.L."/>
            <person name="Huson D.H."/>
            <person name="Kravitz S.A."/>
            <person name="Mouchard L."/>
            <person name="Reinert K."/>
            <person name="Remington K.A."/>
            <person name="Clark A.G."/>
            <person name="Waterman M.S."/>
            <person name="Eichler E.E."/>
            <person name="Adams M.D."/>
            <person name="Hunkapiller M.W."/>
            <person name="Myers E.W."/>
            <person name="Venter J.C."/>
        </authorList>
    </citation>
    <scope>NUCLEOTIDE SEQUENCE [LARGE SCALE GENOMIC DNA]</scope>
</reference>
<reference key="4">
    <citation type="journal article" date="2004" name="Genome Res.">
        <title>The status, quality, and expansion of the NIH full-length cDNA project: the Mammalian Gene Collection (MGC).</title>
        <authorList>
            <consortium name="The MGC Project Team"/>
        </authorList>
    </citation>
    <scope>NUCLEOTIDE SEQUENCE [LARGE SCALE MRNA] (ISOFORM 2)</scope>
    <source>
        <tissue>Muscle</tissue>
    </source>
</reference>
<gene>
    <name type="primary">TOX2</name>
    <name type="synonym">C20orf100</name>
    <name type="synonym">GCX1</name>
</gene>
<organism>
    <name type="scientific">Homo sapiens</name>
    <name type="common">Human</name>
    <dbReference type="NCBI Taxonomy" id="9606"/>
    <lineage>
        <taxon>Eukaryota</taxon>
        <taxon>Metazoa</taxon>
        <taxon>Chordata</taxon>
        <taxon>Craniata</taxon>
        <taxon>Vertebrata</taxon>
        <taxon>Euteleostomi</taxon>
        <taxon>Mammalia</taxon>
        <taxon>Eutheria</taxon>
        <taxon>Euarchontoglires</taxon>
        <taxon>Primates</taxon>
        <taxon>Haplorrhini</taxon>
        <taxon>Catarrhini</taxon>
        <taxon>Hominidae</taxon>
        <taxon>Homo</taxon>
    </lineage>
</organism>
<comment type="function">
    <text>Putative transcriptional activator involved in the hypothalamo-pituitary-gonadal system.</text>
</comment>
<comment type="interaction">
    <interactant intactId="EBI-12815137">
        <id>Q96NM4-3</id>
    </interactant>
    <interactant intactId="EBI-11954519">
        <id>Q49AR9</id>
        <label>ANKS1A</label>
    </interactant>
    <organismsDiffer>false</organismsDiffer>
    <experiments>3</experiments>
</comment>
<comment type="interaction">
    <interactant intactId="EBI-12815137">
        <id>Q96NM4-3</id>
    </interactant>
    <interactant intactId="EBI-10250303">
        <id>Q6IPU0</id>
        <label>CENPP</label>
    </interactant>
    <organismsDiffer>false</organismsDiffer>
    <experiments>3</experiments>
</comment>
<comment type="interaction">
    <interactant intactId="EBI-12815137">
        <id>Q96NM4-3</id>
    </interactant>
    <interactant intactId="EBI-747012">
        <id>Q9H0L4</id>
        <label>CSTF2T</label>
    </interactant>
    <organismsDiffer>false</organismsDiffer>
    <experiments>3</experiments>
</comment>
<comment type="interaction">
    <interactant intactId="EBI-12815137">
        <id>Q96NM4-3</id>
    </interactant>
    <interactant intactId="EBI-744099">
        <id>Q9H0I2</id>
        <label>ENKD1</label>
    </interactant>
    <organismsDiffer>false</organismsDiffer>
    <experiments>3</experiments>
</comment>
<comment type="interaction">
    <interactant intactId="EBI-12815137">
        <id>Q96NM4-3</id>
    </interactant>
    <interactant intactId="EBI-9834454">
        <id>P08631-2</id>
        <label>HCK</label>
    </interactant>
    <organismsDiffer>false</organismsDiffer>
    <experiments>3</experiments>
</comment>
<comment type="interaction">
    <interactant intactId="EBI-12815137">
        <id>Q96NM4-3</id>
    </interactant>
    <interactant intactId="EBI-748420">
        <id>Q9NSC5</id>
        <label>HOMER3</label>
    </interactant>
    <organismsDiffer>false</organismsDiffer>
    <experiments>3</experiments>
</comment>
<comment type="interaction">
    <interactant intactId="EBI-12815137">
        <id>Q96NM4-3</id>
    </interactant>
    <interactant intactId="EBI-7116203">
        <id>O75031</id>
        <label>HSF2BP</label>
    </interactant>
    <organismsDiffer>false</organismsDiffer>
    <experiments>5</experiments>
</comment>
<comment type="interaction">
    <interactant intactId="EBI-12815137">
        <id>Q96NM4-3</id>
    </interactant>
    <interactant intactId="EBI-3957665">
        <id>Q96LI6</id>
        <label>HSFY2</label>
    </interactant>
    <organismsDiffer>false</organismsDiffer>
    <experiments>3</experiments>
</comment>
<comment type="interaction">
    <interactant intactId="EBI-12815137">
        <id>Q96NM4-3</id>
    </interactant>
    <interactant intactId="EBI-720805">
        <id>P56470</id>
        <label>LGALS4</label>
    </interactant>
    <organismsDiffer>false</organismsDiffer>
    <experiments>3</experiments>
</comment>
<comment type="interaction">
    <interactant intactId="EBI-12815137">
        <id>Q96NM4-3</id>
    </interactant>
    <interactant intactId="EBI-1246261">
        <id>O14561</id>
        <label>NDUFAB1</label>
    </interactant>
    <organismsDiffer>false</organismsDiffer>
    <experiments>3</experiments>
</comment>
<comment type="interaction">
    <interactant intactId="EBI-12815137">
        <id>Q96NM4-3</id>
    </interactant>
    <interactant intactId="EBI-10181968">
        <id>Q7Z4N8</id>
        <label>P4HA3</label>
    </interactant>
    <organismsDiffer>false</organismsDiffer>
    <experiments>3</experiments>
</comment>
<comment type="interaction">
    <interactant intactId="EBI-12815137">
        <id>Q96NM4-3</id>
    </interactant>
    <interactant intactId="EBI-530034">
        <id>O43189</id>
        <label>PHF1</label>
    </interactant>
    <organismsDiffer>false</organismsDiffer>
    <experiments>3</experiments>
</comment>
<comment type="interaction">
    <interactant intactId="EBI-12815137">
        <id>Q96NM4-3</id>
    </interactant>
    <interactant intactId="EBI-10265323">
        <id>Q8N443</id>
        <label>RIBC1</label>
    </interactant>
    <organismsDiffer>false</organismsDiffer>
    <experiments>3</experiments>
</comment>
<comment type="interaction">
    <interactant intactId="EBI-12815137">
        <id>Q96NM4-3</id>
    </interactant>
    <interactant intactId="EBI-742688">
        <id>Q9NZD8</id>
        <label>SPG21</label>
    </interactant>
    <organismsDiffer>false</organismsDiffer>
    <experiments>3</experiments>
</comment>
<comment type="interaction">
    <interactant intactId="EBI-12815137">
        <id>Q96NM4-3</id>
    </interactant>
    <interactant intactId="EBI-710310">
        <id>Q15560</id>
        <label>TCEA2</label>
    </interactant>
    <organismsDiffer>false</organismsDiffer>
    <experiments>3</experiments>
</comment>
<comment type="interaction">
    <interactant intactId="EBI-12815137">
        <id>Q96NM4-3</id>
    </interactant>
    <interactant intactId="EBI-750487">
        <id>Q8WW24</id>
        <label>TEKT4</label>
    </interactant>
    <organismsDiffer>false</organismsDiffer>
    <experiments>3</experiments>
</comment>
<comment type="interaction">
    <interactant intactId="EBI-12815137">
        <id>Q96NM4-3</id>
    </interactant>
    <interactant intactId="EBI-10239812">
        <id>Q96M29</id>
        <label>TEKT5</label>
    </interactant>
    <organismsDiffer>false</organismsDiffer>
    <experiments>3</experiments>
</comment>
<comment type="interaction">
    <interactant intactId="EBI-12815137">
        <id>Q96NM4-3</id>
    </interactant>
    <interactant intactId="EBI-3939165">
        <id>O43711</id>
        <label>TLX3</label>
    </interactant>
    <organismsDiffer>false</organismsDiffer>
    <experiments>3</experiments>
</comment>
<comment type="interaction">
    <interactant intactId="EBI-12815137">
        <id>Q96NM4-3</id>
    </interactant>
    <interactant intactId="EBI-12238241">
        <id>Q8IV45</id>
        <label>UNC5CL</label>
    </interactant>
    <organismsDiffer>false</organismsDiffer>
    <experiments>3</experiments>
</comment>
<comment type="subcellular location">
    <subcellularLocation>
        <location evidence="2">Nucleus</location>
    </subcellularLocation>
</comment>
<comment type="alternative products">
    <event type="alternative splicing"/>
    <isoform>
        <id>Q96NM4-1</id>
        <name>1</name>
        <sequence type="displayed"/>
    </isoform>
    <isoform>
        <id>Q96NM4-2</id>
        <name>2</name>
        <sequence type="described" ref="VSP_002187"/>
    </isoform>
    <isoform>
        <id>Q96NM4-3</id>
        <name>3</name>
        <sequence type="described" ref="VSP_045645 VSP_002187"/>
    </isoform>
    <isoform>
        <id>Q96NM4-4</id>
        <name>4</name>
        <sequence type="described" ref="VSP_047108 VSP_002187"/>
    </isoform>
</comment>
<comment type="caution">
    <text evidence="6">It is uncertain whether Met-1 or Met-52 is the initiator.</text>
</comment>
<name>TOX2_HUMAN</name>
<protein>
    <recommendedName>
        <fullName>TOX high mobility group box family member 2</fullName>
    </recommendedName>
    <alternativeName>
        <fullName>Granulosa cell HMG box protein 1</fullName>
        <shortName>GCX-1</shortName>
    </alternativeName>
</protein>
<keyword id="KW-0025">Alternative splicing</keyword>
<keyword id="KW-0238">DNA-binding</keyword>
<keyword id="KW-0539">Nucleus</keyword>
<keyword id="KW-1267">Proteomics identification</keyword>
<keyword id="KW-1185">Reference proteome</keyword>
<keyword id="KW-0804">Transcription</keyword>
<keyword id="KW-0805">Transcription regulation</keyword>
<sequence>MQQTRTEAVAGAFSRCLGFCGMRLGLLLLARHWCIAGVFPQKFDGDSAYVGMSDGNPELLSTSQTYNGQSENNEDYEIPPITPPNLPEPSLLHLGDHEASYHSLCHGLTPNGLLPAYSYQAMDLPAIMVSNMLAQDSHLLSGQLPTIQEMVHSEVAAYDSGRPGPLLGRPAMLASHMSALSQSQLISQMGIRSSIAHSSPSPPGSKSATPSPSSSTQEEESEVHFKISGEKRPSADPGKKAKNPKKKKKKDPNEPQKPVSAYALFFRDTQAAIKGQNPSATFGDVSKIVASMWDSLGEEQKQSSPDQGETKSTQANPPAKMLPPKQPMYAMPGLASFLTPSDLQAFRSGASPASLARTLGSKSLLPGLSASPPPPPSFPLSPTLHQQLSLPPHAQGALLSPPVSMSPAPQPPVLPTPMALQVQLAMSPSPPGPQDFPHISEFPSSSGSCSPGPSNPTSSGDWDSSYPSGECGISTCSLLPRDKSLYLT</sequence>
<dbReference type="EMBL" id="AK055135">
    <property type="protein sequence ID" value="BAB70860.1"/>
    <property type="molecule type" value="mRNA"/>
</dbReference>
<dbReference type="EMBL" id="AK289906">
    <property type="protein sequence ID" value="BAF82595.1"/>
    <property type="molecule type" value="mRNA"/>
</dbReference>
<dbReference type="EMBL" id="AL034419">
    <property type="status" value="NOT_ANNOTATED_CDS"/>
    <property type="molecule type" value="Genomic_DNA"/>
</dbReference>
<dbReference type="EMBL" id="AL121587">
    <property type="status" value="NOT_ANNOTATED_CDS"/>
    <property type="molecule type" value="Genomic_DNA"/>
</dbReference>
<dbReference type="EMBL" id="AL035089">
    <property type="status" value="NOT_ANNOTATED_CDS"/>
    <property type="molecule type" value="Genomic_DNA"/>
</dbReference>
<dbReference type="EMBL" id="AL353797">
    <property type="status" value="NOT_ANNOTATED_CDS"/>
    <property type="molecule type" value="Genomic_DNA"/>
</dbReference>
<dbReference type="EMBL" id="CH471077">
    <property type="protein sequence ID" value="EAW75944.1"/>
    <property type="molecule type" value="Genomic_DNA"/>
</dbReference>
<dbReference type="EMBL" id="CH471077">
    <property type="protein sequence ID" value="EAW75945.1"/>
    <property type="molecule type" value="Genomic_DNA"/>
</dbReference>
<dbReference type="EMBL" id="CH471077">
    <property type="protein sequence ID" value="EAW75946.1"/>
    <property type="molecule type" value="Genomic_DNA"/>
</dbReference>
<dbReference type="EMBL" id="BC007636">
    <property type="status" value="NOT_ANNOTATED_CDS"/>
    <property type="molecule type" value="mRNA"/>
</dbReference>
<dbReference type="CCDS" id="CCDS13324.1">
    <molecule id="Q96NM4-3"/>
</dbReference>
<dbReference type="CCDS" id="CCDS42875.1">
    <molecule id="Q96NM4-1"/>
</dbReference>
<dbReference type="CCDS" id="CCDS46603.1">
    <molecule id="Q96NM4-4"/>
</dbReference>
<dbReference type="RefSeq" id="NP_001092266.1">
    <molecule id="Q96NM4-3"/>
    <property type="nucleotide sequence ID" value="NM_001098796.2"/>
</dbReference>
<dbReference type="RefSeq" id="NP_001092267.1">
    <molecule id="Q96NM4-4"/>
    <property type="nucleotide sequence ID" value="NM_001098797.2"/>
</dbReference>
<dbReference type="RefSeq" id="NP_001092268.1">
    <molecule id="Q96NM4-1"/>
    <property type="nucleotide sequence ID" value="NM_001098798.2"/>
</dbReference>
<dbReference type="RefSeq" id="NP_116272.1">
    <molecule id="Q96NM4-3"/>
    <property type="nucleotide sequence ID" value="NM_032883.3"/>
</dbReference>
<dbReference type="RefSeq" id="XP_006723947.1">
    <molecule id="Q96NM4-2"/>
    <property type="nucleotide sequence ID" value="XM_006723884.1"/>
</dbReference>
<dbReference type="RefSeq" id="XP_047296516.1">
    <molecule id="Q96NM4-3"/>
    <property type="nucleotide sequence ID" value="XM_047440560.1"/>
</dbReference>
<dbReference type="RefSeq" id="XP_047296517.1">
    <molecule id="Q96NM4-3"/>
    <property type="nucleotide sequence ID" value="XM_047440561.1"/>
</dbReference>
<dbReference type="RefSeq" id="XP_054180132.1">
    <molecule id="Q96NM4-2"/>
    <property type="nucleotide sequence ID" value="XM_054324157.1"/>
</dbReference>
<dbReference type="RefSeq" id="XP_054180133.1">
    <molecule id="Q96NM4-3"/>
    <property type="nucleotide sequence ID" value="XM_054324158.1"/>
</dbReference>
<dbReference type="SMR" id="Q96NM4"/>
<dbReference type="BioGRID" id="124399">
    <property type="interactions" value="31"/>
</dbReference>
<dbReference type="FunCoup" id="Q96NM4">
    <property type="interactions" value="1533"/>
</dbReference>
<dbReference type="IntAct" id="Q96NM4">
    <property type="interactions" value="28"/>
</dbReference>
<dbReference type="STRING" id="9606.ENSP00000344724"/>
<dbReference type="GlyGen" id="Q96NM4">
    <property type="glycosylation" value="4 sites, 1 O-linked glycan (1 site)"/>
</dbReference>
<dbReference type="iPTMnet" id="Q96NM4"/>
<dbReference type="PhosphoSitePlus" id="Q96NM4"/>
<dbReference type="BioMuta" id="TOX2"/>
<dbReference type="DMDM" id="24211591"/>
<dbReference type="jPOST" id="Q96NM4"/>
<dbReference type="MassIVE" id="Q96NM4"/>
<dbReference type="PaxDb" id="9606-ENSP00000344724"/>
<dbReference type="PeptideAtlas" id="Q96NM4"/>
<dbReference type="ProteomicsDB" id="15213"/>
<dbReference type="ProteomicsDB" id="33713"/>
<dbReference type="ProteomicsDB" id="77537">
    <molecule id="Q96NM4-1"/>
</dbReference>
<dbReference type="ProteomicsDB" id="77538">
    <molecule id="Q96NM4-2"/>
</dbReference>
<dbReference type="Pumba" id="Q96NM4"/>
<dbReference type="Antibodypedia" id="27319">
    <property type="antibodies" value="126 antibodies from 25 providers"/>
</dbReference>
<dbReference type="DNASU" id="84969"/>
<dbReference type="Ensembl" id="ENST00000341197.9">
    <molecule id="Q96NM4-4"/>
    <property type="protein sequence ID" value="ENSP00000344724.3"/>
    <property type="gene ID" value="ENSG00000124191.18"/>
</dbReference>
<dbReference type="Ensembl" id="ENST00000358131.5">
    <molecule id="Q96NM4-1"/>
    <property type="protein sequence ID" value="ENSP00000350849.5"/>
    <property type="gene ID" value="ENSG00000124191.18"/>
</dbReference>
<dbReference type="Ensembl" id="ENST00000372999.5">
    <molecule id="Q96NM4-3"/>
    <property type="protein sequence ID" value="ENSP00000362090.1"/>
    <property type="gene ID" value="ENSG00000124191.18"/>
</dbReference>
<dbReference type="Ensembl" id="ENST00000423191.6">
    <molecule id="Q96NM4-3"/>
    <property type="protein sequence ID" value="ENSP00000390278.1"/>
    <property type="gene ID" value="ENSG00000124191.18"/>
</dbReference>
<dbReference type="GeneID" id="84969"/>
<dbReference type="KEGG" id="hsa:84969"/>
<dbReference type="MANE-Select" id="ENST00000341197.9">
    <molecule id="Q96NM4-4"/>
    <property type="protein sequence ID" value="ENSP00000344724.3"/>
    <property type="RefSeq nucleotide sequence ID" value="NM_001098797.2"/>
    <property type="RefSeq protein sequence ID" value="NP_001092267.1"/>
</dbReference>
<dbReference type="UCSC" id="uc002xle.5">
    <molecule id="Q96NM4-1"/>
    <property type="organism name" value="human"/>
</dbReference>
<dbReference type="AGR" id="HGNC:16095"/>
<dbReference type="CTD" id="84969"/>
<dbReference type="DisGeNET" id="84969"/>
<dbReference type="GeneCards" id="TOX2"/>
<dbReference type="HGNC" id="HGNC:16095">
    <property type="gene designation" value="TOX2"/>
</dbReference>
<dbReference type="HPA" id="ENSG00000124191">
    <property type="expression patterns" value="Tissue enhanced (lymphoid)"/>
</dbReference>
<dbReference type="MIM" id="611163">
    <property type="type" value="gene"/>
</dbReference>
<dbReference type="neXtProt" id="NX_Q96NM4"/>
<dbReference type="OpenTargets" id="ENSG00000124191"/>
<dbReference type="PharmGKB" id="PA162406727"/>
<dbReference type="VEuPathDB" id="HostDB:ENSG00000124191"/>
<dbReference type="eggNOG" id="KOG0381">
    <property type="taxonomic scope" value="Eukaryota"/>
</dbReference>
<dbReference type="GeneTree" id="ENSGT00940000158764"/>
<dbReference type="HOGENOM" id="CLU_030650_2_0_1"/>
<dbReference type="InParanoid" id="Q96NM4"/>
<dbReference type="OMA" id="MGMNEAN"/>
<dbReference type="OrthoDB" id="10027956at2759"/>
<dbReference type="PAN-GO" id="Q96NM4">
    <property type="GO annotations" value="3 GO annotations based on evolutionary models"/>
</dbReference>
<dbReference type="PhylomeDB" id="Q96NM4"/>
<dbReference type="TreeFam" id="TF106481"/>
<dbReference type="PathwayCommons" id="Q96NM4"/>
<dbReference type="SignaLink" id="Q96NM4"/>
<dbReference type="SIGNOR" id="Q96NM4"/>
<dbReference type="BioGRID-ORCS" id="84969">
    <property type="hits" value="11 hits in 1164 CRISPR screens"/>
</dbReference>
<dbReference type="ChiTaRS" id="TOX2">
    <property type="organism name" value="human"/>
</dbReference>
<dbReference type="GenomeRNAi" id="84969"/>
<dbReference type="Pharos" id="Q96NM4">
    <property type="development level" value="Tbio"/>
</dbReference>
<dbReference type="PRO" id="PR:Q96NM4"/>
<dbReference type="Proteomes" id="UP000005640">
    <property type="component" value="Chromosome 20"/>
</dbReference>
<dbReference type="RNAct" id="Q96NM4">
    <property type="molecule type" value="protein"/>
</dbReference>
<dbReference type="Bgee" id="ENSG00000124191">
    <property type="expression patterns" value="Expressed in secondary oocyte and 131 other cell types or tissues"/>
</dbReference>
<dbReference type="ExpressionAtlas" id="Q96NM4">
    <property type="expression patterns" value="baseline and differential"/>
</dbReference>
<dbReference type="GO" id="GO:0005654">
    <property type="term" value="C:nucleoplasm"/>
    <property type="evidence" value="ECO:0000314"/>
    <property type="project" value="HPA"/>
</dbReference>
<dbReference type="GO" id="GO:0005634">
    <property type="term" value="C:nucleus"/>
    <property type="evidence" value="ECO:0000318"/>
    <property type="project" value="GO_Central"/>
</dbReference>
<dbReference type="GO" id="GO:0031490">
    <property type="term" value="F:chromatin DNA binding"/>
    <property type="evidence" value="ECO:0000318"/>
    <property type="project" value="GO_Central"/>
</dbReference>
<dbReference type="GO" id="GO:0003713">
    <property type="term" value="F:transcription coactivator activity"/>
    <property type="evidence" value="ECO:0000314"/>
    <property type="project" value="NTNU_SB"/>
</dbReference>
<dbReference type="GO" id="GO:0045944">
    <property type="term" value="P:positive regulation of transcription by RNA polymerase II"/>
    <property type="evidence" value="ECO:0000314"/>
    <property type="project" value="NTNU_SB"/>
</dbReference>
<dbReference type="GO" id="GO:0006357">
    <property type="term" value="P:regulation of transcription by RNA polymerase II"/>
    <property type="evidence" value="ECO:0000318"/>
    <property type="project" value="GO_Central"/>
</dbReference>
<dbReference type="CDD" id="cd21995">
    <property type="entry name" value="HMG-box_TOX-like"/>
    <property type="match status" value="1"/>
</dbReference>
<dbReference type="FunFam" id="1.10.30.10:FF:000005">
    <property type="entry name" value="TOX high mobility group box family member 3"/>
    <property type="match status" value="1"/>
</dbReference>
<dbReference type="Gene3D" id="1.10.30.10">
    <property type="entry name" value="High mobility group box domain"/>
    <property type="match status" value="1"/>
</dbReference>
<dbReference type="InterPro" id="IPR009071">
    <property type="entry name" value="HMG_box_dom"/>
</dbReference>
<dbReference type="InterPro" id="IPR036910">
    <property type="entry name" value="HMG_box_dom_sf"/>
</dbReference>
<dbReference type="InterPro" id="IPR051365">
    <property type="entry name" value="TOX_HMG-box_domain"/>
</dbReference>
<dbReference type="PANTHER" id="PTHR45781">
    <property type="entry name" value="AGAP000281-PA"/>
    <property type="match status" value="1"/>
</dbReference>
<dbReference type="PANTHER" id="PTHR45781:SF5">
    <property type="entry name" value="TOX HIGH MOBILITY GROUP BOX FAMILY MEMBER 2"/>
    <property type="match status" value="1"/>
</dbReference>
<dbReference type="Pfam" id="PF00505">
    <property type="entry name" value="HMG_box"/>
    <property type="match status" value="1"/>
</dbReference>
<dbReference type="SMART" id="SM00398">
    <property type="entry name" value="HMG"/>
    <property type="match status" value="1"/>
</dbReference>
<dbReference type="SUPFAM" id="SSF47095">
    <property type="entry name" value="HMG-box"/>
    <property type="match status" value="1"/>
</dbReference>
<dbReference type="PROSITE" id="PS50118">
    <property type="entry name" value="HMG_BOX_2"/>
    <property type="match status" value="1"/>
</dbReference>
<evidence type="ECO:0000250" key="1"/>
<evidence type="ECO:0000255" key="2">
    <source>
        <dbReference type="PROSITE-ProRule" id="PRU00267"/>
    </source>
</evidence>
<evidence type="ECO:0000256" key="3">
    <source>
        <dbReference type="SAM" id="MobiDB-lite"/>
    </source>
</evidence>
<evidence type="ECO:0000303" key="4">
    <source>
    </source>
</evidence>
<evidence type="ECO:0000303" key="5">
    <source>
    </source>
</evidence>
<evidence type="ECO:0000305" key="6"/>
<accession>Q96NM4</accession>
<accession>A8K1J1</accession>
<accession>E1P5X0</accession>
<accession>G3XAC7</accession>
<accession>Q5TE33</accession>
<accession>Q5TE34</accession>
<accession>Q5TE35</accession>
<accession>Q96IC9</accession>
<accession>Q9BQN5</accession>
<feature type="chain" id="PRO_0000048571" description="TOX high mobility group box family member 2">
    <location>
        <begin position="1"/>
        <end position="488"/>
    </location>
</feature>
<feature type="DNA-binding region" description="HMG box" evidence="2">
    <location>
        <begin position="255"/>
        <end position="323"/>
    </location>
</feature>
<feature type="region of interest" description="Required for transcriptional activation" evidence="1">
    <location>
        <begin position="76"/>
        <end position="114"/>
    </location>
</feature>
<feature type="region of interest" description="Disordered" evidence="3">
    <location>
        <begin position="192"/>
        <end position="258"/>
    </location>
</feature>
<feature type="region of interest" description="Disordered" evidence="3">
    <location>
        <begin position="293"/>
        <end position="328"/>
    </location>
</feature>
<feature type="region of interest" description="Disordered" evidence="3">
    <location>
        <begin position="363"/>
        <end position="473"/>
    </location>
</feature>
<feature type="short sequence motif" description="Nuclear localization signal" evidence="1">
    <location>
        <begin position="223"/>
        <end position="252"/>
    </location>
</feature>
<feature type="compositionally biased region" description="Low complexity" evidence="3">
    <location>
        <begin position="204"/>
        <end position="216"/>
    </location>
</feature>
<feature type="compositionally biased region" description="Basic and acidic residues" evidence="3">
    <location>
        <begin position="222"/>
        <end position="239"/>
    </location>
</feature>
<feature type="compositionally biased region" description="Basic residues" evidence="3">
    <location>
        <begin position="240"/>
        <end position="250"/>
    </location>
</feature>
<feature type="compositionally biased region" description="Polar residues" evidence="3">
    <location>
        <begin position="302"/>
        <end position="316"/>
    </location>
</feature>
<feature type="compositionally biased region" description="Low complexity" evidence="3">
    <location>
        <begin position="443"/>
        <end position="460"/>
    </location>
</feature>
<feature type="splice variant" id="VSP_045645" description="In isoform 3." evidence="4">
    <location>
        <begin position="1"/>
        <end position="51"/>
    </location>
</feature>
<feature type="splice variant" id="VSP_047108" description="In isoform 4." evidence="6">
    <original>MQQTRTEAVAGAFSRCLGFCGMRLGLLLLARHWCIAGVFPQ</original>
    <variation>MDVRLYPSAPAVGARPGAEPAGLAHLDYYHGG</variation>
    <location>
        <begin position="1"/>
        <end position="41"/>
    </location>
</feature>
<feature type="splice variant" id="VSP_002187" description="In isoform 2, isoform 3 and isoform 4." evidence="4 5">
    <original>Q</original>
    <variation>QAYKRKTEAAKKEYLKALAAYRASLVSK</variation>
    <location>
        <position position="302"/>
    </location>
</feature>
<feature type="sequence variant" id="VAR_049560" description="In dbSNP:rs6103584.">
    <original>V</original>
    <variation>A</variation>
    <location>
        <position position="223"/>
    </location>
</feature>
<feature type="sequence conflict" description="In Ref. 1; BAF82595." evidence="6" ref="1">
    <original>P</original>
    <variation>PP</variation>
    <location>
        <position position="372"/>
    </location>
</feature>
<feature type="sequence conflict" description="In Ref. 1; BAB70860." evidence="6" ref="1">
    <original>D</original>
    <variation>N</variation>
    <location>
        <position position="482"/>
    </location>
</feature>
<proteinExistence type="evidence at protein level"/>